<proteinExistence type="evidence at protein level"/>
<accession>P11248</accession>
<dbReference type="EMBL" id="X14674">
    <property type="protein sequence ID" value="CAA32804.1"/>
    <property type="molecule type" value="Genomic_DNA"/>
</dbReference>
<dbReference type="EMBL" id="Z46939">
    <property type="protein sequence ID" value="CAA87062.1"/>
    <property type="molecule type" value="Genomic_DNA"/>
</dbReference>
<dbReference type="PIR" id="S57666">
    <property type="entry name" value="S57666"/>
</dbReference>
<dbReference type="RefSeq" id="NP_037005.1">
    <property type="nucleotide sequence ID" value="NM_012873.2"/>
</dbReference>
<dbReference type="FunCoup" id="P11248">
    <property type="interactions" value="2"/>
</dbReference>
<dbReference type="STRING" id="10116.ENSRNOP00000003450"/>
<dbReference type="iPTMnet" id="P11248"/>
<dbReference type="PhosphoSitePlus" id="P11248"/>
<dbReference type="PaxDb" id="10116-ENSRNOP00000003450"/>
<dbReference type="Ensembl" id="ENSRNOT00000003450.3">
    <property type="protein sequence ID" value="ENSRNOP00000003450.1"/>
    <property type="gene ID" value="ENSRNOG00000002539.3"/>
</dbReference>
<dbReference type="GeneID" id="25345"/>
<dbReference type="KEGG" id="rno:25345"/>
<dbReference type="UCSC" id="RGD:3409">
    <property type="organism name" value="rat"/>
</dbReference>
<dbReference type="AGR" id="RGD:3409"/>
<dbReference type="CTD" id="5620"/>
<dbReference type="RGD" id="3409">
    <property type="gene designation" value="Prm2"/>
</dbReference>
<dbReference type="eggNOG" id="ENOG502TD5P">
    <property type="taxonomic scope" value="Eukaryota"/>
</dbReference>
<dbReference type="GeneTree" id="ENSGT00940000163619"/>
<dbReference type="HOGENOM" id="CLU_175685_0_0_1"/>
<dbReference type="InParanoid" id="P11248"/>
<dbReference type="OMA" id="PCAPIPG"/>
<dbReference type="OrthoDB" id="9634608at2759"/>
<dbReference type="TreeFam" id="TF338206"/>
<dbReference type="PRO" id="PR:P11248"/>
<dbReference type="Proteomes" id="UP000002494">
    <property type="component" value="Chromosome 10"/>
</dbReference>
<dbReference type="Bgee" id="ENSRNOG00000002539">
    <property type="expression patterns" value="Expressed in testis and 7 other cell types or tissues"/>
</dbReference>
<dbReference type="GO" id="GO:0001673">
    <property type="term" value="C:male germ cell nucleus"/>
    <property type="evidence" value="ECO:0000266"/>
    <property type="project" value="RGD"/>
</dbReference>
<dbReference type="GO" id="GO:0000786">
    <property type="term" value="C:nucleosome"/>
    <property type="evidence" value="ECO:0007669"/>
    <property type="project" value="UniProtKB-KW"/>
</dbReference>
<dbReference type="GO" id="GO:0005634">
    <property type="term" value="C:nucleus"/>
    <property type="evidence" value="ECO:0000266"/>
    <property type="project" value="RGD"/>
</dbReference>
<dbReference type="GO" id="GO:0046870">
    <property type="term" value="F:cadmium ion binding"/>
    <property type="evidence" value="ECO:0000266"/>
    <property type="project" value="RGD"/>
</dbReference>
<dbReference type="GO" id="GO:0003677">
    <property type="term" value="F:DNA binding"/>
    <property type="evidence" value="ECO:0007669"/>
    <property type="project" value="UniProtKB-KW"/>
</dbReference>
<dbReference type="GO" id="GO:0008270">
    <property type="term" value="F:zinc ion binding"/>
    <property type="evidence" value="ECO:0000266"/>
    <property type="project" value="RGD"/>
</dbReference>
<dbReference type="GO" id="GO:0030261">
    <property type="term" value="P:chromosome condensation"/>
    <property type="evidence" value="ECO:0007669"/>
    <property type="project" value="UniProtKB-KW"/>
</dbReference>
<dbReference type="GO" id="GO:0006997">
    <property type="term" value="P:nucleus organization"/>
    <property type="evidence" value="ECO:0000266"/>
    <property type="project" value="RGD"/>
</dbReference>
<dbReference type="GO" id="GO:0007286">
    <property type="term" value="P:spermatid development"/>
    <property type="evidence" value="ECO:0000266"/>
    <property type="project" value="RGD"/>
</dbReference>
<dbReference type="GO" id="GO:0007283">
    <property type="term" value="P:spermatogenesis"/>
    <property type="evidence" value="ECO:0000250"/>
    <property type="project" value="UniProtKB"/>
</dbReference>
<dbReference type="InterPro" id="IPR000492">
    <property type="entry name" value="PRM2"/>
</dbReference>
<dbReference type="PANTHER" id="PTHR21341">
    <property type="entry name" value="PROTAMINE-2"/>
    <property type="match status" value="1"/>
</dbReference>
<dbReference type="PANTHER" id="PTHR21341:SF2">
    <property type="entry name" value="PROTAMINE-2"/>
    <property type="match status" value="1"/>
</dbReference>
<dbReference type="Pfam" id="PF00841">
    <property type="entry name" value="Protamine_P2"/>
    <property type="match status" value="1"/>
</dbReference>
<evidence type="ECO:0000250" key="1">
    <source>
        <dbReference type="UniProtKB" id="P07978"/>
    </source>
</evidence>
<evidence type="ECO:0000256" key="2">
    <source>
        <dbReference type="SAM" id="MobiDB-lite"/>
    </source>
</evidence>
<evidence type="ECO:0000305" key="3"/>
<evidence type="ECO:0007744" key="4">
    <source>
    </source>
</evidence>
<comment type="function">
    <text evidence="1">Protamines substitute for histones in the chromatin of sperm during the haploid phase of spermatogenesis. They compact sperm DNA into a highly condensed, stable and inactive complex.</text>
</comment>
<comment type="subunit">
    <text evidence="1">Interacts with TDRP.</text>
</comment>
<comment type="subcellular location">
    <subcellularLocation>
        <location evidence="1">Nucleus</location>
    </subcellularLocation>
    <subcellularLocation>
        <location evidence="1">Chromosome</location>
    </subcellularLocation>
</comment>
<comment type="tissue specificity">
    <text>Testis.</text>
</comment>
<comment type="PTM">
    <text evidence="1">Proteolytic processing into mature chains is required for histone eviction during spermatogenesis. Transition proteins (TNP1 and TNP2) are required for processing.</text>
</comment>
<comment type="similarity">
    <text evidence="3">Belongs to the protamine P2 family.</text>
</comment>
<reference key="1">
    <citation type="journal article" date="1989" name="Nucleic Acids Res.">
        <title>Nucleotide sequence of the rat protamine 2 gene.</title>
        <authorList>
            <person name="Tanhauser S.M."/>
            <person name="Hecht N.B."/>
        </authorList>
    </citation>
    <scope>NUCLEOTIDE SEQUENCE [GENOMIC DNA]</scope>
    <source>
        <strain>Fischer</strain>
    </source>
</reference>
<reference key="2">
    <citation type="journal article" date="1996" name="Mol. Reprod. Dev.">
        <title>Sequence analysis of the conserved protamine gene cluster shows that it contains a fourth expressed gene.</title>
        <authorList>
            <person name="Schlueter G."/>
            <person name="Celik A.B."/>
            <person name="Obata R."/>
            <person name="Schlicker M."/>
            <person name="Hofferbert S."/>
            <person name="Schlung A."/>
            <person name="Adham I.M."/>
            <person name="Engel W."/>
        </authorList>
    </citation>
    <scope>NUCLEOTIDE SEQUENCE [GENOMIC DNA]</scope>
    <source>
        <strain>Wistar</strain>
        <tissue>Spleen</tissue>
    </source>
</reference>
<reference key="3">
    <citation type="journal article" date="2012" name="Nat. Commun.">
        <title>Quantitative maps of protein phosphorylation sites across 14 different rat organs and tissues.</title>
        <authorList>
            <person name="Lundby A."/>
            <person name="Secher A."/>
            <person name="Lage K."/>
            <person name="Nordsborg N.B."/>
            <person name="Dmytriyev A."/>
            <person name="Lundby C."/>
            <person name="Olsen J.V."/>
        </authorList>
    </citation>
    <scope>PHOSPHORYLATION [LARGE SCALE ANALYSIS] AT SER-8; SER-10 AND SER-33</scope>
    <scope>IDENTIFICATION BY MASS SPECTROMETRY [LARGE SCALE ANALYSIS]</scope>
</reference>
<protein>
    <recommendedName>
        <fullName>Protamine-2</fullName>
    </recommendedName>
    <alternativeName>
        <fullName>Sperm histone P2</fullName>
    </alternativeName>
    <alternativeName>
        <fullName>Sperm protamine P2</fullName>
    </alternativeName>
</protein>
<organism>
    <name type="scientific">Rattus norvegicus</name>
    <name type="common">Rat</name>
    <dbReference type="NCBI Taxonomy" id="10116"/>
    <lineage>
        <taxon>Eukaryota</taxon>
        <taxon>Metazoa</taxon>
        <taxon>Chordata</taxon>
        <taxon>Craniata</taxon>
        <taxon>Vertebrata</taxon>
        <taxon>Euteleostomi</taxon>
        <taxon>Mammalia</taxon>
        <taxon>Eutheria</taxon>
        <taxon>Euarchontoglires</taxon>
        <taxon>Glires</taxon>
        <taxon>Rodentia</taxon>
        <taxon>Myomorpha</taxon>
        <taxon>Muroidea</taxon>
        <taxon>Muridae</taxon>
        <taxon>Murinae</taxon>
        <taxon>Rattus</taxon>
    </lineage>
</organism>
<sequence>MVRYRMRSPSEGQHQGPGQDHEREEQGQGQELSPERVEDYGRTERGHHHRHRRCKRLHRIHKRRRSCRRRRRHSCRHRRRHRRGCRRSRRRRSCRCRKCRWHYY</sequence>
<keyword id="KW-0158">Chromosome</keyword>
<keyword id="KW-0217">Developmental protein</keyword>
<keyword id="KW-0221">Differentiation</keyword>
<keyword id="KW-0226">DNA condensation</keyword>
<keyword id="KW-0238">DNA-binding</keyword>
<keyword id="KW-0544">Nucleosome core</keyword>
<keyword id="KW-0539">Nucleus</keyword>
<keyword id="KW-0597">Phosphoprotein</keyword>
<keyword id="KW-1185">Reference proteome</keyword>
<keyword id="KW-0744">Spermatogenesis</keyword>
<gene>
    <name type="primary">Prm2</name>
</gene>
<feature type="chain" id="PRO_0000191608" description="Protamine-2">
    <location>
        <begin position="1"/>
        <end position="104"/>
    </location>
</feature>
<feature type="region of interest" description="Disordered" evidence="2">
    <location>
        <begin position="1"/>
        <end position="91"/>
    </location>
</feature>
<feature type="compositionally biased region" description="Basic and acidic residues" evidence="2">
    <location>
        <begin position="33"/>
        <end position="44"/>
    </location>
</feature>
<feature type="compositionally biased region" description="Basic residues" evidence="2">
    <location>
        <begin position="45"/>
        <end position="91"/>
    </location>
</feature>
<feature type="modified residue" description="Phosphoserine" evidence="4">
    <location>
        <position position="8"/>
    </location>
</feature>
<feature type="modified residue" description="Phosphoserine" evidence="4">
    <location>
        <position position="10"/>
    </location>
</feature>
<feature type="modified residue" description="Phosphoserine" evidence="4">
    <location>
        <position position="33"/>
    </location>
</feature>
<feature type="sequence conflict" description="In Ref. 2; CAA87062." evidence="3" ref="2">
    <original>R</original>
    <variation>RVSTQ</variation>
    <location>
        <position position="83"/>
    </location>
</feature>
<name>PRM2_RAT</name>